<sequence length="120" mass="13297">MRLPAQLLGLLMLWVPGSSAEIVMTQTPLSLSITPGEQASMSCRSSQSLLHSDGYTYLYWFLQKARPVSTLLIYEVSNRFSGVPDRFSGSGSGTDFTLKISRVEAEDFGVYYCMQDAQDP</sequence>
<name>KVD26_HUMAN</name>
<evidence type="ECO:0000250" key="1">
    <source>
        <dbReference type="UniProtKB" id="P01602"/>
    </source>
</evidence>
<evidence type="ECO:0000255" key="2"/>
<evidence type="ECO:0000255" key="3">
    <source>
        <dbReference type="PROSITE-ProRule" id="PRU00114"/>
    </source>
</evidence>
<evidence type="ECO:0000303" key="4">
    <source>
    </source>
</evidence>
<evidence type="ECO:0000303" key="5">
    <source>
    </source>
</evidence>
<evidence type="ECO:0000303" key="6">
    <source>
    </source>
</evidence>
<evidence type="ECO:0000303" key="7">
    <source>
    </source>
</evidence>
<evidence type="ECO:0000303" key="8">
    <source>
    </source>
</evidence>
<evidence type="ECO:0000303" key="9">
    <source ref="3"/>
</evidence>
<evidence type="ECO:0000305" key="10"/>
<gene>
    <name evidence="4 9" type="primary">IGKV2D-26</name>
</gene>
<comment type="function">
    <text evidence="5 6 7 8">V region of the variable domain of immunoglobulin light chains that participates in the antigen recognition (PubMed:24600447). Immunoglobulins, also known as antibodies, are membrane-bound or secreted glycoproteins produced by B lymphocytes. In the recognition phase of humoral immunity, the membrane-bound immunoglobulins serve as receptors which, upon binding of a specific antigen, trigger the clonal expansion and differentiation of B lymphocytes into immunoglobulins-secreting plasma cells. Secreted immunoglobulins mediate the effector phase of humoral immunity, which results in the elimination of bound antigens (PubMed:20176268, PubMed:22158414). The antigen binding site is formed by the variable domain of one heavy chain, together with that of its associated light chain. Thus, each immunoglobulin has two antigen binding sites with remarkable affinity for a particular antigen. The variable domains are assembled by a process called V-(D)-J rearrangement and can then be subjected to somatic hypermutations which, after exposure to antigen and selection, allow affinity maturation for a particular antigen (PubMed:17576170, PubMed:20176268).</text>
</comment>
<comment type="subunit">
    <text evidence="6">Immunoglobulins are composed of two identical heavy chains and two identical light chains; disulfide-linked.</text>
</comment>
<comment type="subcellular location">
    <subcellularLocation>
        <location evidence="6 7">Secreted</location>
    </subcellularLocation>
    <subcellularLocation>
        <location evidence="6 7">Cell membrane</location>
    </subcellularLocation>
</comment>
<comment type="polymorphism">
    <text>There are several alleles. The sequence shown is that of IMGT allele IGKV2D-26*01.</text>
</comment>
<comment type="caution">
    <text evidence="10">For an example of a full-length immunoglobulin kappa light chain see AC P0DOX7.</text>
</comment>
<feature type="signal peptide" evidence="2">
    <location>
        <begin position="1"/>
        <end position="20"/>
    </location>
</feature>
<feature type="chain" id="PRO_5001967237" description="Immunoglobulin kappa variable 2D-26" evidence="2">
    <location>
        <begin position="21"/>
        <end position="120"/>
    </location>
</feature>
<feature type="domain" description="Ig-like" evidence="3">
    <location>
        <begin position="21"/>
        <end position="120" status="greater than"/>
    </location>
</feature>
<feature type="region of interest" description="Framework-1" evidence="1">
    <location>
        <begin position="21"/>
        <end position="43"/>
    </location>
</feature>
<feature type="region of interest" description="Complementarity-determining-1" evidence="1">
    <location>
        <begin position="44"/>
        <end position="59"/>
    </location>
</feature>
<feature type="region of interest" description="Framework-2" evidence="1">
    <location>
        <begin position="60"/>
        <end position="74"/>
    </location>
</feature>
<feature type="region of interest" description="Complementarity-determining-2" evidence="1">
    <location>
        <begin position="75"/>
        <end position="81"/>
    </location>
</feature>
<feature type="region of interest" description="Framework-3" evidence="1">
    <location>
        <begin position="82"/>
        <end position="113"/>
    </location>
</feature>
<feature type="region of interest" description="Complementarity-determining-3" evidence="1">
    <location>
        <begin position="114"/>
        <end position="120" status="greater than"/>
    </location>
</feature>
<feature type="disulfide bond" evidence="3">
    <location>
        <begin position="43"/>
        <end position="113"/>
    </location>
</feature>
<feature type="non-terminal residue">
    <location>
        <position position="120"/>
    </location>
</feature>
<proteinExistence type="evidence at protein level"/>
<organism>
    <name type="scientific">Homo sapiens</name>
    <name type="common">Human</name>
    <dbReference type="NCBI Taxonomy" id="9606"/>
    <lineage>
        <taxon>Eukaryota</taxon>
        <taxon>Metazoa</taxon>
        <taxon>Chordata</taxon>
        <taxon>Craniata</taxon>
        <taxon>Vertebrata</taxon>
        <taxon>Euteleostomi</taxon>
        <taxon>Mammalia</taxon>
        <taxon>Eutheria</taxon>
        <taxon>Euarchontoglires</taxon>
        <taxon>Primates</taxon>
        <taxon>Haplorrhini</taxon>
        <taxon>Catarrhini</taxon>
        <taxon>Hominidae</taxon>
        <taxon>Homo</taxon>
    </lineage>
</organism>
<protein>
    <recommendedName>
        <fullName evidence="4 9">Immunoglobulin kappa variable 2D-26</fullName>
    </recommendedName>
</protein>
<dbReference type="EMBL" id="AC233264">
    <property type="status" value="NOT_ANNOTATED_CDS"/>
    <property type="molecule type" value="Genomic_DNA"/>
</dbReference>
<dbReference type="SMR" id="A0A0A0MRZ7"/>
<dbReference type="FunCoup" id="A0A0A0MRZ7">
    <property type="interactions" value="229"/>
</dbReference>
<dbReference type="IMGT_GENE-DB" id="IGKV2D-26"/>
<dbReference type="GlyGen" id="A0A0A0MRZ7">
    <property type="glycosylation" value="1 site"/>
</dbReference>
<dbReference type="BioMuta" id="IGKV2D-26"/>
<dbReference type="jPOST" id="A0A0A0MRZ7"/>
<dbReference type="MassIVE" id="A0A0A0MRZ7"/>
<dbReference type="PRIDE" id="A0A0A0MRZ7"/>
<dbReference type="Ensembl" id="ENST00000390268.2">
    <property type="protein sequence ID" value="ENSP00000374803.2"/>
    <property type="gene ID" value="ENSG00000211623.2"/>
</dbReference>
<dbReference type="UCSC" id="uc061lrr.1">
    <property type="organism name" value="human"/>
</dbReference>
<dbReference type="AGR" id="HGNC:5798"/>
<dbReference type="GeneCards" id="IGKV2D-26"/>
<dbReference type="HGNC" id="HGNC:5798">
    <property type="gene designation" value="IGKV2D-26"/>
</dbReference>
<dbReference type="HPA" id="ENSG00000211623">
    <property type="expression patterns" value="Tissue enhanced (intestine, lymphoid tissue)"/>
</dbReference>
<dbReference type="neXtProt" id="NX_A0A0A0MRZ7"/>
<dbReference type="OpenTargets" id="ENSG00000211623"/>
<dbReference type="VEuPathDB" id="HostDB:ENSG00000211623"/>
<dbReference type="GeneTree" id="ENSGT00940000154039"/>
<dbReference type="HOGENOM" id="CLU_077975_4_1_1"/>
<dbReference type="InParanoid" id="A0A0A0MRZ7"/>
<dbReference type="OMA" id="YWFLQKA"/>
<dbReference type="OrthoDB" id="8908372at2759"/>
<dbReference type="PAN-GO" id="A0A0A0MRZ7">
    <property type="GO annotations" value="3 GO annotations based on evolutionary models"/>
</dbReference>
<dbReference type="PhylomeDB" id="A0A0A0MRZ7"/>
<dbReference type="SignaLink" id="A0A0A0MRZ7"/>
<dbReference type="Pharos" id="A0A0A0MRZ7">
    <property type="development level" value="Tdark"/>
</dbReference>
<dbReference type="PRO" id="PR:A0A0A0MRZ7"/>
<dbReference type="Proteomes" id="UP000005640">
    <property type="component" value="Chromosome 2"/>
</dbReference>
<dbReference type="RNAct" id="A0A0A0MRZ7">
    <property type="molecule type" value="protein"/>
</dbReference>
<dbReference type="Bgee" id="ENSG00000211623">
    <property type="expression patterns" value="Expressed in male germ line stem cell (sensu Vertebrata) in testis and 54 other cell types or tissues"/>
</dbReference>
<dbReference type="GO" id="GO:0005576">
    <property type="term" value="C:extracellular region"/>
    <property type="evidence" value="ECO:0007669"/>
    <property type="project" value="UniProtKB-SubCell"/>
</dbReference>
<dbReference type="GO" id="GO:0019814">
    <property type="term" value="C:immunoglobulin complex"/>
    <property type="evidence" value="ECO:0000318"/>
    <property type="project" value="GO_Central"/>
</dbReference>
<dbReference type="GO" id="GO:0005886">
    <property type="term" value="C:plasma membrane"/>
    <property type="evidence" value="ECO:0007669"/>
    <property type="project" value="UniProtKB-SubCell"/>
</dbReference>
<dbReference type="GO" id="GO:0002250">
    <property type="term" value="P:adaptive immune response"/>
    <property type="evidence" value="ECO:0007669"/>
    <property type="project" value="UniProtKB-KW"/>
</dbReference>
<dbReference type="GO" id="GO:0006955">
    <property type="term" value="P:immune response"/>
    <property type="evidence" value="ECO:0000318"/>
    <property type="project" value="GO_Central"/>
</dbReference>
<dbReference type="FunFam" id="2.60.40.10:FF:000365">
    <property type="entry name" value="If kappa light chain"/>
    <property type="match status" value="1"/>
</dbReference>
<dbReference type="Gene3D" id="2.60.40.10">
    <property type="entry name" value="Immunoglobulins"/>
    <property type="match status" value="1"/>
</dbReference>
<dbReference type="InterPro" id="IPR007110">
    <property type="entry name" value="Ig-like_dom"/>
</dbReference>
<dbReference type="InterPro" id="IPR036179">
    <property type="entry name" value="Ig-like_dom_sf"/>
</dbReference>
<dbReference type="InterPro" id="IPR013783">
    <property type="entry name" value="Ig-like_fold"/>
</dbReference>
<dbReference type="InterPro" id="IPR013106">
    <property type="entry name" value="Ig_V-set"/>
</dbReference>
<dbReference type="InterPro" id="IPR050150">
    <property type="entry name" value="IgV_Light_Chain"/>
</dbReference>
<dbReference type="PANTHER" id="PTHR23267">
    <property type="entry name" value="IMMUNOGLOBULIN LIGHT CHAIN"/>
    <property type="match status" value="1"/>
</dbReference>
<dbReference type="Pfam" id="PF07686">
    <property type="entry name" value="V-set"/>
    <property type="match status" value="1"/>
</dbReference>
<dbReference type="SMART" id="SM00406">
    <property type="entry name" value="IGv"/>
    <property type="match status" value="1"/>
</dbReference>
<dbReference type="SUPFAM" id="SSF48726">
    <property type="entry name" value="Immunoglobulin"/>
    <property type="match status" value="1"/>
</dbReference>
<dbReference type="PROSITE" id="PS50835">
    <property type="entry name" value="IG_LIKE"/>
    <property type="match status" value="1"/>
</dbReference>
<accession>A0A0A0MRZ7</accession>
<reference key="1">
    <citation type="journal article" date="2005" name="Nature">
        <title>Generation and annotation of the DNA sequences of human chromosomes 2 and 4.</title>
        <authorList>
            <person name="Hillier L.W."/>
            <person name="Graves T.A."/>
            <person name="Fulton R.S."/>
            <person name="Fulton L.A."/>
            <person name="Pepin K.H."/>
            <person name="Minx P."/>
            <person name="Wagner-McPherson C."/>
            <person name="Layman D."/>
            <person name="Wylie K."/>
            <person name="Sekhon M."/>
            <person name="Becker M.C."/>
            <person name="Fewell G.A."/>
            <person name="Delehaunty K.D."/>
            <person name="Miner T.L."/>
            <person name="Nash W.E."/>
            <person name="Kremitzki C."/>
            <person name="Oddy L."/>
            <person name="Du H."/>
            <person name="Sun H."/>
            <person name="Bradshaw-Cordum H."/>
            <person name="Ali J."/>
            <person name="Carter J."/>
            <person name="Cordes M."/>
            <person name="Harris A."/>
            <person name="Isak A."/>
            <person name="van Brunt A."/>
            <person name="Nguyen C."/>
            <person name="Du F."/>
            <person name="Courtney L."/>
            <person name="Kalicki J."/>
            <person name="Ozersky P."/>
            <person name="Abbott S."/>
            <person name="Armstrong J."/>
            <person name="Belter E.A."/>
            <person name="Caruso L."/>
            <person name="Cedroni M."/>
            <person name="Cotton M."/>
            <person name="Davidson T."/>
            <person name="Desai A."/>
            <person name="Elliott G."/>
            <person name="Erb T."/>
            <person name="Fronick C."/>
            <person name="Gaige T."/>
            <person name="Haakenson W."/>
            <person name="Haglund K."/>
            <person name="Holmes A."/>
            <person name="Harkins R."/>
            <person name="Kim K."/>
            <person name="Kruchowski S.S."/>
            <person name="Strong C.M."/>
            <person name="Grewal N."/>
            <person name="Goyea E."/>
            <person name="Hou S."/>
            <person name="Levy A."/>
            <person name="Martinka S."/>
            <person name="Mead K."/>
            <person name="McLellan M.D."/>
            <person name="Meyer R."/>
            <person name="Randall-Maher J."/>
            <person name="Tomlinson C."/>
            <person name="Dauphin-Kohlberg S."/>
            <person name="Kozlowicz-Reilly A."/>
            <person name="Shah N."/>
            <person name="Swearengen-Shahid S."/>
            <person name="Snider J."/>
            <person name="Strong J.T."/>
            <person name="Thompson J."/>
            <person name="Yoakum M."/>
            <person name="Leonard S."/>
            <person name="Pearman C."/>
            <person name="Trani L."/>
            <person name="Radionenko M."/>
            <person name="Waligorski J.E."/>
            <person name="Wang C."/>
            <person name="Rock S.M."/>
            <person name="Tin-Wollam A.-M."/>
            <person name="Maupin R."/>
            <person name="Latreille P."/>
            <person name="Wendl M.C."/>
            <person name="Yang S.-P."/>
            <person name="Pohl C."/>
            <person name="Wallis J.W."/>
            <person name="Spieth J."/>
            <person name="Bieri T.A."/>
            <person name="Berkowicz N."/>
            <person name="Nelson J.O."/>
            <person name="Osborne J."/>
            <person name="Ding L."/>
            <person name="Meyer R."/>
            <person name="Sabo A."/>
            <person name="Shotland Y."/>
            <person name="Sinha P."/>
            <person name="Wohldmann P.E."/>
            <person name="Cook L.L."/>
            <person name="Hickenbotham M.T."/>
            <person name="Eldred J."/>
            <person name="Williams D."/>
            <person name="Jones T.A."/>
            <person name="She X."/>
            <person name="Ciccarelli F.D."/>
            <person name="Izaurralde E."/>
            <person name="Taylor J."/>
            <person name="Schmutz J."/>
            <person name="Myers R.M."/>
            <person name="Cox D.R."/>
            <person name="Huang X."/>
            <person name="McPherson J.D."/>
            <person name="Mardis E.R."/>
            <person name="Clifton S.W."/>
            <person name="Warren W.C."/>
            <person name="Chinwalla A.T."/>
            <person name="Eddy S.R."/>
            <person name="Marra M.A."/>
            <person name="Ovcharenko I."/>
            <person name="Furey T.S."/>
            <person name="Miller W."/>
            <person name="Eichler E.E."/>
            <person name="Bork P."/>
            <person name="Suyama M."/>
            <person name="Torrents D."/>
            <person name="Waterston R.H."/>
            <person name="Wilson R.K."/>
        </authorList>
    </citation>
    <scope>NUCLEOTIDE SEQUENCE [LARGE SCALE GENOMIC DNA] (IMGT ALLELE IGKV2D-26*01)</scope>
</reference>
<reference key="2">
    <citation type="journal article" date="2001" name="Exp. Clin. Immunogenet.">
        <title>Nomenclature of the human immunoglobulin kappa (IGK) genes.</title>
        <authorList>
            <person name="Lefranc M.P."/>
        </authorList>
    </citation>
    <scope>NOMEMCLATURE</scope>
</reference>
<reference key="3">
    <citation type="book" date="2001" name="The Immunoglobulin FactsBook.">
        <title>The Immunoglobulin FactsBook.</title>
        <editorList>
            <person name="Lefranc M.P."/>
            <person name="Lefranc G."/>
        </editorList>
        <authorList>
            <person name="Lefranc M.P."/>
            <person name="Lefranc G."/>
        </authorList>
    </citation>
    <scope>NOMENCLATURE</scope>
</reference>
<reference key="4">
    <citation type="journal article" date="2007" name="Annu. Rev. Genet.">
        <title>Immunoglobulin somatic hypermutation.</title>
        <authorList>
            <person name="Teng G."/>
            <person name="Papavasiliou F.N."/>
        </authorList>
    </citation>
    <scope>REVIEW ON SOMATIC HYPERMUTATION</scope>
</reference>
<reference key="5">
    <citation type="journal article" date="2010" name="J. Allergy Clin. Immunol.">
        <title>Structure and function of immunoglobulins.</title>
        <authorList>
            <person name="Schroeder H.W. Jr."/>
            <person name="Cavacini L."/>
        </authorList>
    </citation>
    <scope>REVIEW ON IMMUNOGLOBULINS</scope>
</reference>
<reference key="6">
    <citation type="journal article" date="2012" name="Nat. Rev. Immunol.">
        <title>Molecular programming of B cell memory.</title>
        <authorList>
            <person name="McHeyzer-Williams M."/>
            <person name="Okitsu S."/>
            <person name="Wang N."/>
            <person name="McHeyzer-Williams L."/>
        </authorList>
    </citation>
    <scope>REVIEW ON FUNCTION</scope>
</reference>
<reference key="7">
    <citation type="journal article" date="2014" name="Front. Immunol.">
        <title>Immunoglobulin and T Cell Receptor Genes: IMGT((R)) and the Birth and Rise of Immunoinformatics.</title>
        <authorList>
            <person name="Lefranc M.P."/>
        </authorList>
    </citation>
    <scope>NOMENCLATURE</scope>
</reference>
<keyword id="KW-1064">Adaptive immunity</keyword>
<keyword id="KW-1003">Cell membrane</keyword>
<keyword id="KW-1015">Disulfide bond</keyword>
<keyword id="KW-0391">Immunity</keyword>
<keyword id="KW-1280">Immunoglobulin</keyword>
<keyword id="KW-0393">Immunoglobulin domain</keyword>
<keyword id="KW-0472">Membrane</keyword>
<keyword id="KW-1267">Proteomics identification</keyword>
<keyword id="KW-1185">Reference proteome</keyword>
<keyword id="KW-0964">Secreted</keyword>
<keyword id="KW-0732">Signal</keyword>